<feature type="chain" id="PRO_0000425925" description="Packaging protein 1">
    <location>
        <begin position="1"/>
        <end position="443"/>
    </location>
</feature>
<feature type="region of interest" description="Disordered" evidence="2">
    <location>
        <begin position="1"/>
        <end position="75"/>
    </location>
</feature>
<feature type="region of interest" description="DNA-binding" evidence="1">
    <location>
        <begin position="433"/>
        <end position="443"/>
    </location>
</feature>
<feature type="compositionally biased region" description="Basic and acidic residues" evidence="2">
    <location>
        <begin position="13"/>
        <end position="56"/>
    </location>
</feature>
<feature type="binding site" evidence="1">
    <location>
        <begin position="169"/>
        <end position="176"/>
    </location>
    <ligand>
        <name>ATP</name>
        <dbReference type="ChEBI" id="CHEBI:30616"/>
    </ligand>
</feature>
<organismHost>
    <name type="scientific">Pantherophis guttatus</name>
    <name type="common">Corn snake</name>
    <name type="synonym">Elaphe guttata</name>
    <dbReference type="NCBI Taxonomy" id="94885"/>
</organismHost>
<protein>
    <recommendedName>
        <fullName evidence="1">Packaging protein 1</fullName>
    </recommendedName>
    <alternativeName>
        <fullName evidence="1">Packaging protein IVa2</fullName>
    </alternativeName>
</protein>
<sequence>MSGAADGTVPVGEDTHQEDSGERECEQRPVHSGREATGESDPALERPDHGERHGPEPRFPSFSVRPEAAQPPPSRTIARESFLGRFITDCLKWKNDVVKIDPNICKDPFPSDDEIFGNIGSHSTLLRELHECAYRYQKAVNASHPLLQRDGSLKTLNYGVQPFIVTVYGPTGSGKSQFLRNVISSKMIDPPPETVFFVTPEKGTVTNEEKLSWEAQCAEGVYNSKCVPITKTFQPAFVNLSFSEAVDEENLSIDSPNNVFVQAAKKGPICIIIDECMNQLGACRSISSFFHALPSKIFGRFPACTGYTVLVVLHNMNPRSDRGNIKDLKIQSKCHIISPQLESQQVSRFIKNFSFGFPTPLVSVIKDIVDHAKMHSKFSWLVYCSVPVRESFRWSYYSPEDQLTPLYVDLQAVMYEACHNIRRVFCKRLYSRVSYANKRKWYD</sequence>
<proteinExistence type="inferred from homology"/>
<reference key="1">
    <citation type="journal article" date="2002" name="J. Gen. Virol.">
        <title>Genetic analysis of an adenovirus isolated from corn snake (Elaphe guttata) implies common origin with the members of the proposed new genus Atadenovirus.</title>
        <authorList>
            <person name="Farkas S.L."/>
            <person name="Benko M."/>
            <person name="Elo P.T."/>
            <person name="Ursu K."/>
            <person name="Dan A."/>
            <person name="Ahne W."/>
            <person name="Harrach B."/>
        </authorList>
    </citation>
    <scope>NUCLEOTIDE SEQUENCE [GENOMIC DNA]</scope>
</reference>
<gene>
    <name evidence="1" type="primary">IVa2</name>
</gene>
<name>PKG1_ADES1</name>
<organism>
    <name type="scientific">Snake adenovirus serotype 1</name>
    <name type="common">SnAdV-1</name>
    <dbReference type="NCBI Taxonomy" id="189830"/>
    <lineage>
        <taxon>Viruses</taxon>
        <taxon>Varidnaviria</taxon>
        <taxon>Bamfordvirae</taxon>
        <taxon>Preplasmiviricota</taxon>
        <taxon>Tectiliviricetes</taxon>
        <taxon>Rowavirales</taxon>
        <taxon>Adenoviridae</taxon>
        <taxon>Atadenovirus</taxon>
        <taxon>Snake atadenovirus A</taxon>
    </lineage>
</organism>
<evidence type="ECO:0000255" key="1">
    <source>
        <dbReference type="HAMAP-Rule" id="MF_04057"/>
    </source>
</evidence>
<evidence type="ECO:0000256" key="2">
    <source>
        <dbReference type="SAM" id="MobiDB-lite"/>
    </source>
</evidence>
<keyword id="KW-0010">Activator</keyword>
<keyword id="KW-0067">ATP-binding</keyword>
<keyword id="KW-0238">DNA-binding</keyword>
<keyword id="KW-1048">Host nucleus</keyword>
<keyword id="KW-0547">Nucleotide-binding</keyword>
<keyword id="KW-0597">Phosphoprotein</keyword>
<keyword id="KW-1185">Reference proteome</keyword>
<keyword id="KW-0804">Transcription</keyword>
<keyword id="KW-0805">Transcription regulation</keyword>
<keyword id="KW-0231">Viral genome packaging</keyword>
<keyword id="KW-1188">Viral release from host cell</keyword>
<keyword id="KW-0946">Virion</keyword>
<accession>A9CB86</accession>
<dbReference type="EMBL" id="DQ106414">
    <property type="protein sequence ID" value="ABA47236.1"/>
    <property type="molecule type" value="Genomic_DNA"/>
</dbReference>
<dbReference type="RefSeq" id="YP_001552246.1">
    <property type="nucleotide sequence ID" value="NC_009989.1"/>
</dbReference>
<dbReference type="KEGG" id="vg:10973888"/>
<dbReference type="OrthoDB" id="5048at10239"/>
<dbReference type="Proteomes" id="UP000136605">
    <property type="component" value="Genome"/>
</dbReference>
<dbReference type="GO" id="GO:0044196">
    <property type="term" value="C:host cell nucleolus"/>
    <property type="evidence" value="ECO:0007669"/>
    <property type="project" value="UniProtKB-SubCell"/>
</dbReference>
<dbReference type="GO" id="GO:0044095">
    <property type="term" value="C:host cell nucleoplasm"/>
    <property type="evidence" value="ECO:0007669"/>
    <property type="project" value="UniProtKB-SubCell"/>
</dbReference>
<dbReference type="GO" id="GO:0044423">
    <property type="term" value="C:virion component"/>
    <property type="evidence" value="ECO:0007669"/>
    <property type="project" value="UniProtKB-UniRule"/>
</dbReference>
<dbReference type="GO" id="GO:0005524">
    <property type="term" value="F:ATP binding"/>
    <property type="evidence" value="ECO:0007669"/>
    <property type="project" value="UniProtKB-UniRule"/>
</dbReference>
<dbReference type="GO" id="GO:0003677">
    <property type="term" value="F:DNA binding"/>
    <property type="evidence" value="ECO:0007669"/>
    <property type="project" value="UniProtKB-UniRule"/>
</dbReference>
<dbReference type="GO" id="GO:0006351">
    <property type="term" value="P:DNA-templated transcription"/>
    <property type="evidence" value="ECO:0007669"/>
    <property type="project" value="UniProtKB-UniRule"/>
</dbReference>
<dbReference type="GO" id="GO:0039708">
    <property type="term" value="P:nuclear capsid assembly"/>
    <property type="evidence" value="ECO:0007669"/>
    <property type="project" value="UniProtKB-UniRule"/>
</dbReference>
<dbReference type="GO" id="GO:0006355">
    <property type="term" value="P:regulation of DNA-templated transcription"/>
    <property type="evidence" value="ECO:0007669"/>
    <property type="project" value="UniProtKB-UniRule"/>
</dbReference>
<dbReference type="GO" id="GO:0098035">
    <property type="term" value="P:viral DNA genome packaging via site-specific sequence recognition"/>
    <property type="evidence" value="ECO:0007669"/>
    <property type="project" value="UniProtKB-UniRule"/>
</dbReference>
<dbReference type="GO" id="GO:0019076">
    <property type="term" value="P:viral release from host cell"/>
    <property type="evidence" value="ECO:0007669"/>
    <property type="project" value="UniProtKB-UniRule"/>
</dbReference>
<dbReference type="GO" id="GO:0019083">
    <property type="term" value="P:viral transcription"/>
    <property type="evidence" value="ECO:0007669"/>
    <property type="project" value="UniProtKB-UniRule"/>
</dbReference>
<dbReference type="HAMAP" id="MF_04057">
    <property type="entry name" value="ADV_PKG1"/>
    <property type="match status" value="1"/>
</dbReference>
<dbReference type="InterPro" id="IPR003389">
    <property type="entry name" value="Adeno_IVa2"/>
</dbReference>
<dbReference type="InterPro" id="IPR027417">
    <property type="entry name" value="P-loop_NTPase"/>
</dbReference>
<dbReference type="Pfam" id="PF02456">
    <property type="entry name" value="Adeno_IVa2"/>
    <property type="match status" value="1"/>
</dbReference>
<dbReference type="SUPFAM" id="SSF52540">
    <property type="entry name" value="P-loop containing nucleoside triphosphate hydrolases"/>
    <property type="match status" value="1"/>
</dbReference>
<comment type="function">
    <text evidence="1">Component of the packaging machinery which encapsidates the viral DNA into preformed capsids and transcriptional activator of the viral major late promoter (MLP). Binds, along with packaging proteins 2 and 3, to the specific packaging sequence on the left end of viral genomic DNA and displays ATPase activity thereby providing the power stroke of the packaging machinery. The activity of packaging protein IVa2 is stimulated by protein 33K which acts as a terminase. May be the protein that pumps DNA into the capsid powered by ATP hydrolysis. Specifically binds to the 5'-CG-3' nucleotides of the repeats making up the packaging sequence. Component of the DEF-A and DEF-B transcription factors that bind downstream elements of the major late promoter (MLP), and stimulate transcription from the MLP after initiation of viral DNA replication. DEF-A is a heterodimer packaging proteins 1 and 2 and DEF-B is a homodimer of packaging protein 1.</text>
</comment>
<comment type="subunit">
    <text evidence="1">Homodimer. Part of a genome packaging complex composed of packaging proteins 1, 2 and 3; this complex specifically binds to the packaging sequence on the left end of viral genomic DNA and performs packaging of the viral genome. Interacts with protein 33K.</text>
</comment>
<comment type="subcellular location">
    <subcellularLocation>
        <location evidence="1">Virion</location>
    </subcellularLocation>
    <subcellularLocation>
        <location evidence="1">Host nucleus</location>
        <location evidence="1">Host nucleoplasm</location>
    </subcellularLocation>
    <subcellularLocation>
        <location evidence="1">Host nucleus</location>
        <location evidence="1">Host nucleolus</location>
    </subcellularLocation>
    <text evidence="1">Located at a unique vertex of the capsid. Present in about 6-8 copies per virion.</text>
</comment>
<comment type="induction">
    <text evidence="1">Expressed in the intermediate phase of the viral replicative cycle.</text>
</comment>
<comment type="similarity">
    <text evidence="1">Belongs to the adenoviridae packaging protein 1 family.</text>
</comment>